<proteinExistence type="inferred from homology"/>
<organism>
    <name type="scientific">Petaurista albiventer</name>
    <name type="common">Chestnut giant flying squirrel</name>
    <dbReference type="NCBI Taxonomy" id="209425"/>
    <lineage>
        <taxon>Eukaryota</taxon>
        <taxon>Metazoa</taxon>
        <taxon>Chordata</taxon>
        <taxon>Craniata</taxon>
        <taxon>Vertebrata</taxon>
        <taxon>Euteleostomi</taxon>
        <taxon>Mammalia</taxon>
        <taxon>Eutheria</taxon>
        <taxon>Euarchontoglires</taxon>
        <taxon>Glires</taxon>
        <taxon>Rodentia</taxon>
        <taxon>Sciuromorpha</taxon>
        <taxon>Sciuridae</taxon>
        <taxon>Sciurinae</taxon>
        <taxon>Pteromyini</taxon>
        <taxon>Petaurista</taxon>
    </lineage>
</organism>
<evidence type="ECO:0000250" key="1"/>
<evidence type="ECO:0000250" key="2">
    <source>
        <dbReference type="UniProtKB" id="P00157"/>
    </source>
</evidence>
<evidence type="ECO:0000255" key="3">
    <source>
        <dbReference type="PROSITE-ProRule" id="PRU00967"/>
    </source>
</evidence>
<evidence type="ECO:0000255" key="4">
    <source>
        <dbReference type="PROSITE-ProRule" id="PRU00968"/>
    </source>
</evidence>
<geneLocation type="mitochondrion"/>
<accession>Q5NUR5</accession>
<name>CYB_PETAB</name>
<keyword id="KW-0249">Electron transport</keyword>
<keyword id="KW-0349">Heme</keyword>
<keyword id="KW-0408">Iron</keyword>
<keyword id="KW-0472">Membrane</keyword>
<keyword id="KW-0479">Metal-binding</keyword>
<keyword id="KW-0496">Mitochondrion</keyword>
<keyword id="KW-0999">Mitochondrion inner membrane</keyword>
<keyword id="KW-0679">Respiratory chain</keyword>
<keyword id="KW-0812">Transmembrane</keyword>
<keyword id="KW-1133">Transmembrane helix</keyword>
<keyword id="KW-0813">Transport</keyword>
<keyword id="KW-0830">Ubiquinone</keyword>
<sequence length="379" mass="42954">MTNIRKTHPLIKIVNHSFIDLPTPSNISAWWNFGSLLGLCLITQILTGLFLAMHYTSDTTTAFSSVTHICRDVNYGWLIRYIHANGASMFFICLYLHVGRGLYYGSYTYFETWNIGVILLFTIMATAFMGYVLPWGQMSFWGATVITNLLSAIPYIGTNLVEWIWGGFSVDKATLTRFFAFHFILPFIITALVMIHLLFLHETGSNNPSGLISDSDKIPFHPYFTIKDILGALLLILTLMLLVLFSPDLLGDPDNYTPANPLNTPPHIKPEWYFLFAYAILRSIPNKLGGVLALVFSILILMLFPILHTSKQRGMMFRPLSQCLFWILAADLFTLTWIGGQPVEHPFIIIGQTASILYFTIILIILPLVSMLENKLLKW</sequence>
<dbReference type="EMBL" id="AB092612">
    <property type="protein sequence ID" value="BAD80726.1"/>
    <property type="molecule type" value="Genomic_DNA"/>
</dbReference>
<dbReference type="EMBL" id="DQ072109">
    <property type="protein sequence ID" value="AAZ23216.1"/>
    <property type="molecule type" value="Genomic_DNA"/>
</dbReference>
<dbReference type="SMR" id="Q5NUR5"/>
<dbReference type="GO" id="GO:0005743">
    <property type="term" value="C:mitochondrial inner membrane"/>
    <property type="evidence" value="ECO:0007669"/>
    <property type="project" value="UniProtKB-SubCell"/>
</dbReference>
<dbReference type="GO" id="GO:0045275">
    <property type="term" value="C:respiratory chain complex III"/>
    <property type="evidence" value="ECO:0007669"/>
    <property type="project" value="InterPro"/>
</dbReference>
<dbReference type="GO" id="GO:0046872">
    <property type="term" value="F:metal ion binding"/>
    <property type="evidence" value="ECO:0007669"/>
    <property type="project" value="UniProtKB-KW"/>
</dbReference>
<dbReference type="GO" id="GO:0008121">
    <property type="term" value="F:ubiquinol-cytochrome-c reductase activity"/>
    <property type="evidence" value="ECO:0007669"/>
    <property type="project" value="InterPro"/>
</dbReference>
<dbReference type="GO" id="GO:0006122">
    <property type="term" value="P:mitochondrial electron transport, ubiquinol to cytochrome c"/>
    <property type="evidence" value="ECO:0007669"/>
    <property type="project" value="TreeGrafter"/>
</dbReference>
<dbReference type="CDD" id="cd00290">
    <property type="entry name" value="cytochrome_b_C"/>
    <property type="match status" value="1"/>
</dbReference>
<dbReference type="CDD" id="cd00284">
    <property type="entry name" value="Cytochrome_b_N"/>
    <property type="match status" value="1"/>
</dbReference>
<dbReference type="FunFam" id="1.20.810.10:FF:000002">
    <property type="entry name" value="Cytochrome b"/>
    <property type="match status" value="1"/>
</dbReference>
<dbReference type="Gene3D" id="1.20.810.10">
    <property type="entry name" value="Cytochrome Bc1 Complex, Chain C"/>
    <property type="match status" value="1"/>
</dbReference>
<dbReference type="InterPro" id="IPR005798">
    <property type="entry name" value="Cyt_b/b6_C"/>
</dbReference>
<dbReference type="InterPro" id="IPR036150">
    <property type="entry name" value="Cyt_b/b6_C_sf"/>
</dbReference>
<dbReference type="InterPro" id="IPR005797">
    <property type="entry name" value="Cyt_b/b6_N"/>
</dbReference>
<dbReference type="InterPro" id="IPR027387">
    <property type="entry name" value="Cytb/b6-like_sf"/>
</dbReference>
<dbReference type="InterPro" id="IPR030689">
    <property type="entry name" value="Cytochrome_b"/>
</dbReference>
<dbReference type="InterPro" id="IPR048260">
    <property type="entry name" value="Cytochrome_b_C_euk/bac"/>
</dbReference>
<dbReference type="InterPro" id="IPR048259">
    <property type="entry name" value="Cytochrome_b_N_euk/bac"/>
</dbReference>
<dbReference type="InterPro" id="IPR016174">
    <property type="entry name" value="Di-haem_cyt_TM"/>
</dbReference>
<dbReference type="PANTHER" id="PTHR19271">
    <property type="entry name" value="CYTOCHROME B"/>
    <property type="match status" value="1"/>
</dbReference>
<dbReference type="PANTHER" id="PTHR19271:SF16">
    <property type="entry name" value="CYTOCHROME B"/>
    <property type="match status" value="1"/>
</dbReference>
<dbReference type="Pfam" id="PF00032">
    <property type="entry name" value="Cytochrom_B_C"/>
    <property type="match status" value="1"/>
</dbReference>
<dbReference type="Pfam" id="PF00033">
    <property type="entry name" value="Cytochrome_B"/>
    <property type="match status" value="1"/>
</dbReference>
<dbReference type="PIRSF" id="PIRSF038885">
    <property type="entry name" value="COB"/>
    <property type="match status" value="1"/>
</dbReference>
<dbReference type="SUPFAM" id="SSF81648">
    <property type="entry name" value="a domain/subunit of cytochrome bc1 complex (Ubiquinol-cytochrome c reductase)"/>
    <property type="match status" value="1"/>
</dbReference>
<dbReference type="SUPFAM" id="SSF81342">
    <property type="entry name" value="Transmembrane di-heme cytochromes"/>
    <property type="match status" value="1"/>
</dbReference>
<dbReference type="PROSITE" id="PS51003">
    <property type="entry name" value="CYTB_CTER"/>
    <property type="match status" value="1"/>
</dbReference>
<dbReference type="PROSITE" id="PS51002">
    <property type="entry name" value="CYTB_NTER"/>
    <property type="match status" value="1"/>
</dbReference>
<reference key="1">
    <citation type="journal article" date="2004" name="Russ. J. Theriol.">
        <title>A preliminary study on molecular phylogeny of giant flying squirrels, genus Petaurista (Rodentis, Sciuridae) based on mitochondrial cytochrome b gene sequences.</title>
        <authorList>
            <person name="Oshida T."/>
            <person name="Shafique C.M."/>
            <person name="Barkati S."/>
            <person name="Fujita Y."/>
            <person name="Lin L.K."/>
            <person name="Masuda R."/>
        </authorList>
    </citation>
    <scope>NUCLEOTIDE SEQUENCE [GENOMIC DNA]</scope>
</reference>
<reference key="2">
    <citation type="journal article" date="2006" name="Mol. Phylogenet. Evol.">
        <title>Phylogeny and biogeography of the Petaurista philippensis complex (Rodentia: Sciuridae), inter- and intraspecific relationships inferred from molecular and morphometric analysis.</title>
        <authorList>
            <person name="Yu F."/>
            <person name="Yu F."/>
            <person name="Pang J."/>
            <person name="Kilpatrick C.W."/>
            <person name="McGuire P.M."/>
            <person name="Wang Y."/>
            <person name="Lu S."/>
            <person name="Woods C.A."/>
        </authorList>
    </citation>
    <scope>NUCLEOTIDE SEQUENCE [GENOMIC DNA]</scope>
    <source>
        <tissue>Skin</tissue>
    </source>
</reference>
<protein>
    <recommendedName>
        <fullName>Cytochrome b</fullName>
    </recommendedName>
    <alternativeName>
        <fullName>Complex III subunit 3</fullName>
    </alternativeName>
    <alternativeName>
        <fullName>Complex III subunit III</fullName>
    </alternativeName>
    <alternativeName>
        <fullName>Cytochrome b-c1 complex subunit 3</fullName>
    </alternativeName>
    <alternativeName>
        <fullName>Ubiquinol-cytochrome-c reductase complex cytochrome b subunit</fullName>
    </alternativeName>
</protein>
<comment type="function">
    <text evidence="2">Component of the ubiquinol-cytochrome c reductase complex (complex III or cytochrome b-c1 complex) that is part of the mitochondrial respiratory chain. The b-c1 complex mediates electron transfer from ubiquinol to cytochrome c. Contributes to the generation of a proton gradient across the mitochondrial membrane that is then used for ATP synthesis.</text>
</comment>
<comment type="cofactor">
    <cofactor evidence="2">
        <name>heme b</name>
        <dbReference type="ChEBI" id="CHEBI:60344"/>
    </cofactor>
    <text evidence="2">Binds 2 heme b groups non-covalently.</text>
</comment>
<comment type="subunit">
    <text evidence="2">The cytochrome bc1 complex contains 11 subunits: 3 respiratory subunits (MT-CYB, CYC1 and UQCRFS1), 2 core proteins (UQCRC1 and UQCRC2) and 6 low-molecular weight proteins (UQCRH/QCR6, UQCRB/QCR7, UQCRQ/QCR8, UQCR10/QCR9, UQCR11/QCR10 and a cleavage product of UQCRFS1). This cytochrome bc1 complex then forms a dimer.</text>
</comment>
<comment type="subcellular location">
    <subcellularLocation>
        <location evidence="2">Mitochondrion inner membrane</location>
        <topology evidence="2">Multi-pass membrane protein</topology>
    </subcellularLocation>
</comment>
<comment type="miscellaneous">
    <text evidence="1">Heme 1 (or BL or b562) is low-potential and absorbs at about 562 nm, and heme 2 (or BH or b566) is high-potential and absorbs at about 566 nm.</text>
</comment>
<comment type="similarity">
    <text evidence="3 4">Belongs to the cytochrome b family.</text>
</comment>
<comment type="caution">
    <text evidence="2">The full-length protein contains only eight transmembrane helices, not nine as predicted by bioinformatics tools.</text>
</comment>
<feature type="chain" id="PRO_0000255114" description="Cytochrome b">
    <location>
        <begin position="1"/>
        <end position="379"/>
    </location>
</feature>
<feature type="transmembrane region" description="Helical" evidence="2">
    <location>
        <begin position="33"/>
        <end position="53"/>
    </location>
</feature>
<feature type="transmembrane region" description="Helical" evidence="2">
    <location>
        <begin position="77"/>
        <end position="98"/>
    </location>
</feature>
<feature type="transmembrane region" description="Helical" evidence="2">
    <location>
        <begin position="113"/>
        <end position="133"/>
    </location>
</feature>
<feature type="transmembrane region" description="Helical" evidence="2">
    <location>
        <begin position="178"/>
        <end position="198"/>
    </location>
</feature>
<feature type="transmembrane region" description="Helical" evidence="2">
    <location>
        <begin position="226"/>
        <end position="246"/>
    </location>
</feature>
<feature type="transmembrane region" description="Helical" evidence="2">
    <location>
        <begin position="288"/>
        <end position="308"/>
    </location>
</feature>
<feature type="transmembrane region" description="Helical" evidence="2">
    <location>
        <begin position="320"/>
        <end position="340"/>
    </location>
</feature>
<feature type="transmembrane region" description="Helical" evidence="2">
    <location>
        <begin position="347"/>
        <end position="367"/>
    </location>
</feature>
<feature type="binding site" description="axial binding residue" evidence="2">
    <location>
        <position position="83"/>
    </location>
    <ligand>
        <name>heme b</name>
        <dbReference type="ChEBI" id="CHEBI:60344"/>
        <label>b562</label>
    </ligand>
    <ligandPart>
        <name>Fe</name>
        <dbReference type="ChEBI" id="CHEBI:18248"/>
    </ligandPart>
</feature>
<feature type="binding site" description="axial binding residue" evidence="2">
    <location>
        <position position="97"/>
    </location>
    <ligand>
        <name>heme b</name>
        <dbReference type="ChEBI" id="CHEBI:60344"/>
        <label>b566</label>
    </ligand>
    <ligandPart>
        <name>Fe</name>
        <dbReference type="ChEBI" id="CHEBI:18248"/>
    </ligandPart>
</feature>
<feature type="binding site" description="axial binding residue" evidence="2">
    <location>
        <position position="182"/>
    </location>
    <ligand>
        <name>heme b</name>
        <dbReference type="ChEBI" id="CHEBI:60344"/>
        <label>b562</label>
    </ligand>
    <ligandPart>
        <name>Fe</name>
        <dbReference type="ChEBI" id="CHEBI:18248"/>
    </ligandPart>
</feature>
<feature type="binding site" description="axial binding residue" evidence="2">
    <location>
        <position position="196"/>
    </location>
    <ligand>
        <name>heme b</name>
        <dbReference type="ChEBI" id="CHEBI:60344"/>
        <label>b566</label>
    </ligand>
    <ligandPart>
        <name>Fe</name>
        <dbReference type="ChEBI" id="CHEBI:18248"/>
    </ligandPart>
</feature>
<feature type="binding site" evidence="2">
    <location>
        <position position="201"/>
    </location>
    <ligand>
        <name>a ubiquinone</name>
        <dbReference type="ChEBI" id="CHEBI:16389"/>
    </ligand>
</feature>
<gene>
    <name type="primary">MT-CYB</name>
    <name type="synonym">COB</name>
    <name type="synonym">CYTB</name>
    <name type="synonym">MTCYB</name>
</gene>